<organism>
    <name type="scientific">Protochlamydia amoebophila (strain UWE25)</name>
    <dbReference type="NCBI Taxonomy" id="264201"/>
    <lineage>
        <taxon>Bacteria</taxon>
        <taxon>Pseudomonadati</taxon>
        <taxon>Chlamydiota</taxon>
        <taxon>Chlamydiia</taxon>
        <taxon>Parachlamydiales</taxon>
        <taxon>Parachlamydiaceae</taxon>
        <taxon>Candidatus Protochlamydia</taxon>
    </lineage>
</organism>
<dbReference type="EC" id="7.1.1.-" evidence="1"/>
<dbReference type="EMBL" id="BX908798">
    <property type="protein sequence ID" value="CAF23290.1"/>
    <property type="molecule type" value="Genomic_DNA"/>
</dbReference>
<dbReference type="RefSeq" id="WP_011175116.1">
    <property type="nucleotide sequence ID" value="NC_005861.2"/>
</dbReference>
<dbReference type="SMR" id="Q6MDQ9"/>
<dbReference type="STRING" id="264201.pc0566"/>
<dbReference type="KEGG" id="pcu:PC_RS02705"/>
<dbReference type="eggNOG" id="COG1005">
    <property type="taxonomic scope" value="Bacteria"/>
</dbReference>
<dbReference type="HOGENOM" id="CLU_015134_0_1_0"/>
<dbReference type="OrthoDB" id="9803734at2"/>
<dbReference type="Proteomes" id="UP000000529">
    <property type="component" value="Chromosome"/>
</dbReference>
<dbReference type="GO" id="GO:0005886">
    <property type="term" value="C:plasma membrane"/>
    <property type="evidence" value="ECO:0007669"/>
    <property type="project" value="UniProtKB-SubCell"/>
</dbReference>
<dbReference type="GO" id="GO:0003954">
    <property type="term" value="F:NADH dehydrogenase activity"/>
    <property type="evidence" value="ECO:0007669"/>
    <property type="project" value="TreeGrafter"/>
</dbReference>
<dbReference type="GO" id="GO:0016655">
    <property type="term" value="F:oxidoreductase activity, acting on NAD(P)H, quinone or similar compound as acceptor"/>
    <property type="evidence" value="ECO:0007669"/>
    <property type="project" value="UniProtKB-UniRule"/>
</dbReference>
<dbReference type="GO" id="GO:0048038">
    <property type="term" value="F:quinone binding"/>
    <property type="evidence" value="ECO:0007669"/>
    <property type="project" value="UniProtKB-KW"/>
</dbReference>
<dbReference type="GO" id="GO:0009060">
    <property type="term" value="P:aerobic respiration"/>
    <property type="evidence" value="ECO:0007669"/>
    <property type="project" value="TreeGrafter"/>
</dbReference>
<dbReference type="HAMAP" id="MF_01350">
    <property type="entry name" value="NDH1_NuoH"/>
    <property type="match status" value="1"/>
</dbReference>
<dbReference type="InterPro" id="IPR001694">
    <property type="entry name" value="NADH_UbQ_OxRdtase_su1/FPO"/>
</dbReference>
<dbReference type="InterPro" id="IPR018086">
    <property type="entry name" value="NADH_UbQ_OxRdtase_su1_CS"/>
</dbReference>
<dbReference type="NCBIfam" id="NF004741">
    <property type="entry name" value="PRK06076.1-2"/>
    <property type="match status" value="1"/>
</dbReference>
<dbReference type="PANTHER" id="PTHR11432">
    <property type="entry name" value="NADH DEHYDROGENASE SUBUNIT 1"/>
    <property type="match status" value="1"/>
</dbReference>
<dbReference type="PANTHER" id="PTHR11432:SF3">
    <property type="entry name" value="NADH-UBIQUINONE OXIDOREDUCTASE CHAIN 1"/>
    <property type="match status" value="1"/>
</dbReference>
<dbReference type="Pfam" id="PF00146">
    <property type="entry name" value="NADHdh"/>
    <property type="match status" value="1"/>
</dbReference>
<dbReference type="PROSITE" id="PS00667">
    <property type="entry name" value="COMPLEX1_ND1_1"/>
    <property type="match status" value="1"/>
</dbReference>
<dbReference type="PROSITE" id="PS00668">
    <property type="entry name" value="COMPLEX1_ND1_2"/>
    <property type="match status" value="1"/>
</dbReference>
<accession>Q6MDQ9</accession>
<evidence type="ECO:0000255" key="1">
    <source>
        <dbReference type="HAMAP-Rule" id="MF_01350"/>
    </source>
</evidence>
<feature type="chain" id="PRO_0000240094" description="NADH-quinone oxidoreductase subunit H">
    <location>
        <begin position="1"/>
        <end position="325"/>
    </location>
</feature>
<feature type="transmembrane region" description="Helical" evidence="1">
    <location>
        <begin position="5"/>
        <end position="25"/>
    </location>
</feature>
<feature type="transmembrane region" description="Helical" evidence="1">
    <location>
        <begin position="75"/>
        <end position="95"/>
    </location>
</feature>
<feature type="transmembrane region" description="Helical" evidence="1">
    <location>
        <begin position="117"/>
        <end position="137"/>
    </location>
</feature>
<feature type="transmembrane region" description="Helical" evidence="1">
    <location>
        <begin position="157"/>
        <end position="177"/>
    </location>
</feature>
<feature type="transmembrane region" description="Helical" evidence="1">
    <location>
        <begin position="190"/>
        <end position="210"/>
    </location>
</feature>
<feature type="transmembrane region" description="Helical" evidence="1">
    <location>
        <begin position="240"/>
        <end position="260"/>
    </location>
</feature>
<feature type="transmembrane region" description="Helical" evidence="1">
    <location>
        <begin position="268"/>
        <end position="288"/>
    </location>
</feature>
<feature type="transmembrane region" description="Helical" evidence="1">
    <location>
        <begin position="305"/>
        <end position="325"/>
    </location>
</feature>
<protein>
    <recommendedName>
        <fullName evidence="1">NADH-quinone oxidoreductase subunit H</fullName>
        <ecNumber evidence="1">7.1.1.-</ecNumber>
    </recommendedName>
    <alternativeName>
        <fullName evidence="1">NADH dehydrogenase I subunit H</fullName>
    </alternativeName>
    <alternativeName>
        <fullName evidence="1">NDH-1 subunit H</fullName>
    </alternativeName>
</protein>
<proteinExistence type="inferred from homology"/>
<name>NUOH_PARUW</name>
<gene>
    <name evidence="1" type="primary">nuoH</name>
    <name type="synonym">nuo8</name>
    <name type="ordered locus">pc0566</name>
</gene>
<reference key="1">
    <citation type="journal article" date="2004" name="Science">
        <title>Illuminating the evolutionary history of chlamydiae.</title>
        <authorList>
            <person name="Horn M."/>
            <person name="Collingro A."/>
            <person name="Schmitz-Esser S."/>
            <person name="Beier C.L."/>
            <person name="Purkhold U."/>
            <person name="Fartmann B."/>
            <person name="Brandt P."/>
            <person name="Nyakatura G.J."/>
            <person name="Droege M."/>
            <person name="Frishman D."/>
            <person name="Rattei T."/>
            <person name="Mewes H.-W."/>
            <person name="Wagner M."/>
        </authorList>
    </citation>
    <scope>NUCLEOTIDE SEQUENCE [LARGE SCALE GENOMIC DNA]</scope>
    <source>
        <strain>UWE25</strain>
    </source>
</reference>
<sequence length="325" mass="36351">MIDDLIIILIKSAVVILLLFTAAAYMTFLERIVMARLQLRMGPVRVGPFGLFQPLADGIKLLCKERFQPANVETFVYWLAPGISLFTALFIFVLIPFGGVVEIAGRLIYLQIADINVGVVFLLAFSSLAVYGVVLAGWASNNRYSLIGGLRGTAQMISYEIPMGLSLLTVVLSTGTLSLREIVELQQNHWLIWTNPISFIIYFITSFAETNRAPFDLPEAEQELTAGYHTEYGGMKFAAFFLGEYINILAVSAIATTLFFGGWHGPGDIPILWFGLKVAIFVFIFMWVRATMPRFRYDQLMSFGWKVLIPIAILNLIITAYFTLV</sequence>
<keyword id="KW-0997">Cell inner membrane</keyword>
<keyword id="KW-1003">Cell membrane</keyword>
<keyword id="KW-0472">Membrane</keyword>
<keyword id="KW-0520">NAD</keyword>
<keyword id="KW-0874">Quinone</keyword>
<keyword id="KW-1185">Reference proteome</keyword>
<keyword id="KW-1278">Translocase</keyword>
<keyword id="KW-0812">Transmembrane</keyword>
<keyword id="KW-1133">Transmembrane helix</keyword>
<keyword id="KW-0830">Ubiquinone</keyword>
<comment type="function">
    <text evidence="1">NDH-1 shuttles electrons from NADH, via FMN and iron-sulfur (Fe-S) centers, to quinones in the respiratory chain. The immediate electron acceptor for the enzyme in this species is believed to be ubiquinone. Couples the redox reaction to proton translocation (for every two electrons transferred, four hydrogen ions are translocated across the cytoplasmic membrane), and thus conserves the redox energy in a proton gradient. This subunit may bind ubiquinone.</text>
</comment>
<comment type="catalytic activity">
    <reaction evidence="1">
        <text>a quinone + NADH + 5 H(+)(in) = a quinol + NAD(+) + 4 H(+)(out)</text>
        <dbReference type="Rhea" id="RHEA:57888"/>
        <dbReference type="ChEBI" id="CHEBI:15378"/>
        <dbReference type="ChEBI" id="CHEBI:24646"/>
        <dbReference type="ChEBI" id="CHEBI:57540"/>
        <dbReference type="ChEBI" id="CHEBI:57945"/>
        <dbReference type="ChEBI" id="CHEBI:132124"/>
    </reaction>
</comment>
<comment type="subunit">
    <text evidence="1">NDH-1 is composed of 14 different subunits. Subunits NuoA, H, J, K, L, M, N constitute the membrane sector of the complex.</text>
</comment>
<comment type="subcellular location">
    <subcellularLocation>
        <location evidence="1">Cell inner membrane</location>
        <topology evidence="1">Multi-pass membrane protein</topology>
    </subcellularLocation>
</comment>
<comment type="similarity">
    <text evidence="1">Belongs to the complex I subunit 1 family.</text>
</comment>